<organism>
    <name type="scientific">Actinobacillus pleuropneumoniae serotype 3 (strain JL03)</name>
    <dbReference type="NCBI Taxonomy" id="434271"/>
    <lineage>
        <taxon>Bacteria</taxon>
        <taxon>Pseudomonadati</taxon>
        <taxon>Pseudomonadota</taxon>
        <taxon>Gammaproteobacteria</taxon>
        <taxon>Pasteurellales</taxon>
        <taxon>Pasteurellaceae</taxon>
        <taxon>Actinobacillus</taxon>
    </lineage>
</organism>
<sequence>MKTFVAKPETVKRDWYVVDATGKTLGRLATELARRLRGKHKAEYTPHVDTGDYIIVINAEKVAVTGKKETDKIYYWHTGYVGGIKDATFKEMIARRPEAVIEIAVKGMLPKGPLGREMFRKLKVYAGNEHNHAAQQPQVLDI</sequence>
<evidence type="ECO:0000255" key="1">
    <source>
        <dbReference type="HAMAP-Rule" id="MF_01366"/>
    </source>
</evidence>
<evidence type="ECO:0000305" key="2"/>
<accession>B0BUF9</accession>
<protein>
    <recommendedName>
        <fullName evidence="1">Large ribosomal subunit protein uL13</fullName>
    </recommendedName>
    <alternativeName>
        <fullName evidence="2">50S ribosomal protein L13</fullName>
    </alternativeName>
</protein>
<keyword id="KW-0687">Ribonucleoprotein</keyword>
<keyword id="KW-0689">Ribosomal protein</keyword>
<name>RL13_ACTPJ</name>
<dbReference type="EMBL" id="CP000687">
    <property type="protein sequence ID" value="ABY69164.1"/>
    <property type="molecule type" value="Genomic_DNA"/>
</dbReference>
<dbReference type="RefSeq" id="WP_005596850.1">
    <property type="nucleotide sequence ID" value="NC_010278.1"/>
</dbReference>
<dbReference type="SMR" id="B0BUF9"/>
<dbReference type="GeneID" id="92742690"/>
<dbReference type="KEGG" id="apj:APJL_0594"/>
<dbReference type="HOGENOM" id="CLU_082184_2_2_6"/>
<dbReference type="Proteomes" id="UP000008547">
    <property type="component" value="Chromosome"/>
</dbReference>
<dbReference type="GO" id="GO:0022625">
    <property type="term" value="C:cytosolic large ribosomal subunit"/>
    <property type="evidence" value="ECO:0007669"/>
    <property type="project" value="TreeGrafter"/>
</dbReference>
<dbReference type="GO" id="GO:0003729">
    <property type="term" value="F:mRNA binding"/>
    <property type="evidence" value="ECO:0007669"/>
    <property type="project" value="TreeGrafter"/>
</dbReference>
<dbReference type="GO" id="GO:0003735">
    <property type="term" value="F:structural constituent of ribosome"/>
    <property type="evidence" value="ECO:0007669"/>
    <property type="project" value="InterPro"/>
</dbReference>
<dbReference type="GO" id="GO:0017148">
    <property type="term" value="P:negative regulation of translation"/>
    <property type="evidence" value="ECO:0007669"/>
    <property type="project" value="TreeGrafter"/>
</dbReference>
<dbReference type="GO" id="GO:0006412">
    <property type="term" value="P:translation"/>
    <property type="evidence" value="ECO:0007669"/>
    <property type="project" value="UniProtKB-UniRule"/>
</dbReference>
<dbReference type="CDD" id="cd00392">
    <property type="entry name" value="Ribosomal_L13"/>
    <property type="match status" value="1"/>
</dbReference>
<dbReference type="FunFam" id="3.90.1180.10:FF:000001">
    <property type="entry name" value="50S ribosomal protein L13"/>
    <property type="match status" value="1"/>
</dbReference>
<dbReference type="Gene3D" id="3.90.1180.10">
    <property type="entry name" value="Ribosomal protein L13"/>
    <property type="match status" value="1"/>
</dbReference>
<dbReference type="HAMAP" id="MF_01366">
    <property type="entry name" value="Ribosomal_uL13"/>
    <property type="match status" value="1"/>
</dbReference>
<dbReference type="InterPro" id="IPR005822">
    <property type="entry name" value="Ribosomal_uL13"/>
</dbReference>
<dbReference type="InterPro" id="IPR005823">
    <property type="entry name" value="Ribosomal_uL13_bac-type"/>
</dbReference>
<dbReference type="InterPro" id="IPR023563">
    <property type="entry name" value="Ribosomal_uL13_CS"/>
</dbReference>
<dbReference type="InterPro" id="IPR036899">
    <property type="entry name" value="Ribosomal_uL13_sf"/>
</dbReference>
<dbReference type="NCBIfam" id="TIGR01066">
    <property type="entry name" value="rplM_bact"/>
    <property type="match status" value="1"/>
</dbReference>
<dbReference type="PANTHER" id="PTHR11545:SF2">
    <property type="entry name" value="LARGE RIBOSOMAL SUBUNIT PROTEIN UL13M"/>
    <property type="match status" value="1"/>
</dbReference>
<dbReference type="PANTHER" id="PTHR11545">
    <property type="entry name" value="RIBOSOMAL PROTEIN L13"/>
    <property type="match status" value="1"/>
</dbReference>
<dbReference type="Pfam" id="PF00572">
    <property type="entry name" value="Ribosomal_L13"/>
    <property type="match status" value="1"/>
</dbReference>
<dbReference type="PIRSF" id="PIRSF002181">
    <property type="entry name" value="Ribosomal_L13"/>
    <property type="match status" value="1"/>
</dbReference>
<dbReference type="SUPFAM" id="SSF52161">
    <property type="entry name" value="Ribosomal protein L13"/>
    <property type="match status" value="1"/>
</dbReference>
<dbReference type="PROSITE" id="PS00783">
    <property type="entry name" value="RIBOSOMAL_L13"/>
    <property type="match status" value="1"/>
</dbReference>
<comment type="function">
    <text evidence="1">This protein is one of the early assembly proteins of the 50S ribosomal subunit, although it is not seen to bind rRNA by itself. It is important during the early stages of 50S assembly.</text>
</comment>
<comment type="subunit">
    <text evidence="1">Part of the 50S ribosomal subunit.</text>
</comment>
<comment type="similarity">
    <text evidence="1">Belongs to the universal ribosomal protein uL13 family.</text>
</comment>
<gene>
    <name evidence="1" type="primary">rplM</name>
    <name type="ordered locus">APJL_0594</name>
</gene>
<proteinExistence type="inferred from homology"/>
<feature type="chain" id="PRO_1000144083" description="Large ribosomal subunit protein uL13">
    <location>
        <begin position="1"/>
        <end position="142"/>
    </location>
</feature>
<reference key="1">
    <citation type="journal article" date="2008" name="PLoS ONE">
        <title>Genome biology of Actinobacillus pleuropneumoniae JL03, an isolate of serotype 3 prevalent in China.</title>
        <authorList>
            <person name="Xu Z."/>
            <person name="Zhou Y."/>
            <person name="Li L."/>
            <person name="Zhou R."/>
            <person name="Xiao S."/>
            <person name="Wan Y."/>
            <person name="Zhang S."/>
            <person name="Wang K."/>
            <person name="Li W."/>
            <person name="Li L."/>
            <person name="Jin H."/>
            <person name="Kang M."/>
            <person name="Dalai B."/>
            <person name="Li T."/>
            <person name="Liu L."/>
            <person name="Cheng Y."/>
            <person name="Zhang L."/>
            <person name="Xu T."/>
            <person name="Zheng H."/>
            <person name="Pu S."/>
            <person name="Wang B."/>
            <person name="Gu W."/>
            <person name="Zhang X.L."/>
            <person name="Zhu G.-F."/>
            <person name="Wang S."/>
            <person name="Zhao G.-P."/>
            <person name="Chen H."/>
        </authorList>
    </citation>
    <scope>NUCLEOTIDE SEQUENCE [LARGE SCALE GENOMIC DNA]</scope>
    <source>
        <strain>JL03</strain>
    </source>
</reference>